<sequence length="207" mass="22668">MAPGEPFSQRRIGLTGGIASGKSSVGRWLAQQGLPVLDADQFAREALAPGHPATNSVMQRYGSTVRAEATEAIDRAALGRIVFHDPAERRWLEHLIHPIVRERFDQALSLHADTPAVVLMIPLLFEAGLESLCSEIWLVDCDESQQLERLIARDGLSPKAAQARIAAQWPLNQKRGLADHVVANQGHPGAWQPQARELLKMSPTAEL</sequence>
<protein>
    <recommendedName>
        <fullName evidence="1">Dephospho-CoA kinase</fullName>
        <ecNumber evidence="1">2.7.1.24</ecNumber>
    </recommendedName>
    <alternativeName>
        <fullName evidence="1">Dephosphocoenzyme A kinase</fullName>
    </alternativeName>
</protein>
<name>COAE_SYNSC</name>
<gene>
    <name evidence="1" type="primary">coaE</name>
    <name type="ordered locus">Syncc9605_2490</name>
</gene>
<reference key="1">
    <citation type="submission" date="2005-07" db="EMBL/GenBank/DDBJ databases">
        <title>Complete sequence of Synechococcus sp. CC9605.</title>
        <authorList>
            <consortium name="US DOE Joint Genome Institute"/>
            <person name="Copeland A."/>
            <person name="Lucas S."/>
            <person name="Lapidus A."/>
            <person name="Barry K."/>
            <person name="Detter J.C."/>
            <person name="Glavina T."/>
            <person name="Hammon N."/>
            <person name="Israni S."/>
            <person name="Pitluck S."/>
            <person name="Schmutz J."/>
            <person name="Martinez M."/>
            <person name="Larimer F."/>
            <person name="Land M."/>
            <person name="Kyrpides N."/>
            <person name="Ivanova N."/>
            <person name="Richardson P."/>
        </authorList>
    </citation>
    <scope>NUCLEOTIDE SEQUENCE [LARGE SCALE GENOMIC DNA]</scope>
    <source>
        <strain>CC9605</strain>
    </source>
</reference>
<comment type="function">
    <text evidence="1">Catalyzes the phosphorylation of the 3'-hydroxyl group of dephosphocoenzyme A to form coenzyme A.</text>
</comment>
<comment type="catalytic activity">
    <reaction evidence="1">
        <text>3'-dephospho-CoA + ATP = ADP + CoA + H(+)</text>
        <dbReference type="Rhea" id="RHEA:18245"/>
        <dbReference type="ChEBI" id="CHEBI:15378"/>
        <dbReference type="ChEBI" id="CHEBI:30616"/>
        <dbReference type="ChEBI" id="CHEBI:57287"/>
        <dbReference type="ChEBI" id="CHEBI:57328"/>
        <dbReference type="ChEBI" id="CHEBI:456216"/>
        <dbReference type="EC" id="2.7.1.24"/>
    </reaction>
</comment>
<comment type="pathway">
    <text evidence="1">Cofactor biosynthesis; coenzyme A biosynthesis; CoA from (R)-pantothenate: step 5/5.</text>
</comment>
<comment type="subcellular location">
    <subcellularLocation>
        <location evidence="1">Cytoplasm</location>
    </subcellularLocation>
</comment>
<comment type="similarity">
    <text evidence="1">Belongs to the CoaE family.</text>
</comment>
<evidence type="ECO:0000255" key="1">
    <source>
        <dbReference type="HAMAP-Rule" id="MF_00376"/>
    </source>
</evidence>
<accession>Q3AGR0</accession>
<organism>
    <name type="scientific">Synechococcus sp. (strain CC9605)</name>
    <dbReference type="NCBI Taxonomy" id="110662"/>
    <lineage>
        <taxon>Bacteria</taxon>
        <taxon>Bacillati</taxon>
        <taxon>Cyanobacteriota</taxon>
        <taxon>Cyanophyceae</taxon>
        <taxon>Synechococcales</taxon>
        <taxon>Synechococcaceae</taxon>
        <taxon>Synechococcus</taxon>
    </lineage>
</organism>
<feature type="chain" id="PRO_0000243352" description="Dephospho-CoA kinase">
    <location>
        <begin position="1"/>
        <end position="207"/>
    </location>
</feature>
<feature type="domain" description="DPCK" evidence="1">
    <location>
        <begin position="11"/>
        <end position="207"/>
    </location>
</feature>
<feature type="binding site" evidence="1">
    <location>
        <begin position="19"/>
        <end position="24"/>
    </location>
    <ligand>
        <name>ATP</name>
        <dbReference type="ChEBI" id="CHEBI:30616"/>
    </ligand>
</feature>
<dbReference type="EC" id="2.7.1.24" evidence="1"/>
<dbReference type="EMBL" id="CP000110">
    <property type="protein sequence ID" value="ABB36222.1"/>
    <property type="molecule type" value="Genomic_DNA"/>
</dbReference>
<dbReference type="RefSeq" id="WP_011365417.1">
    <property type="nucleotide sequence ID" value="NC_007516.1"/>
</dbReference>
<dbReference type="SMR" id="Q3AGR0"/>
<dbReference type="STRING" id="110662.Syncc9605_2490"/>
<dbReference type="KEGG" id="syd:Syncc9605_2490"/>
<dbReference type="eggNOG" id="COG0237">
    <property type="taxonomic scope" value="Bacteria"/>
</dbReference>
<dbReference type="HOGENOM" id="CLU_057180_0_0_3"/>
<dbReference type="OrthoDB" id="9812943at2"/>
<dbReference type="UniPathway" id="UPA00241">
    <property type="reaction ID" value="UER00356"/>
</dbReference>
<dbReference type="GO" id="GO:0005737">
    <property type="term" value="C:cytoplasm"/>
    <property type="evidence" value="ECO:0007669"/>
    <property type="project" value="UniProtKB-SubCell"/>
</dbReference>
<dbReference type="GO" id="GO:0005524">
    <property type="term" value="F:ATP binding"/>
    <property type="evidence" value="ECO:0007669"/>
    <property type="project" value="UniProtKB-UniRule"/>
</dbReference>
<dbReference type="GO" id="GO:0004140">
    <property type="term" value="F:dephospho-CoA kinase activity"/>
    <property type="evidence" value="ECO:0007669"/>
    <property type="project" value="UniProtKB-UniRule"/>
</dbReference>
<dbReference type="GO" id="GO:0015937">
    <property type="term" value="P:coenzyme A biosynthetic process"/>
    <property type="evidence" value="ECO:0007669"/>
    <property type="project" value="UniProtKB-UniRule"/>
</dbReference>
<dbReference type="CDD" id="cd02022">
    <property type="entry name" value="DPCK"/>
    <property type="match status" value="1"/>
</dbReference>
<dbReference type="Gene3D" id="3.40.50.300">
    <property type="entry name" value="P-loop containing nucleotide triphosphate hydrolases"/>
    <property type="match status" value="1"/>
</dbReference>
<dbReference type="HAMAP" id="MF_00376">
    <property type="entry name" value="Dephospho_CoA_kinase"/>
    <property type="match status" value="1"/>
</dbReference>
<dbReference type="InterPro" id="IPR001977">
    <property type="entry name" value="Depp_CoAkinase"/>
</dbReference>
<dbReference type="InterPro" id="IPR027417">
    <property type="entry name" value="P-loop_NTPase"/>
</dbReference>
<dbReference type="NCBIfam" id="TIGR00152">
    <property type="entry name" value="dephospho-CoA kinase"/>
    <property type="match status" value="1"/>
</dbReference>
<dbReference type="PANTHER" id="PTHR10695:SF46">
    <property type="entry name" value="BIFUNCTIONAL COENZYME A SYNTHASE-RELATED"/>
    <property type="match status" value="1"/>
</dbReference>
<dbReference type="PANTHER" id="PTHR10695">
    <property type="entry name" value="DEPHOSPHO-COA KINASE-RELATED"/>
    <property type="match status" value="1"/>
</dbReference>
<dbReference type="Pfam" id="PF01121">
    <property type="entry name" value="CoaE"/>
    <property type="match status" value="1"/>
</dbReference>
<dbReference type="SUPFAM" id="SSF52540">
    <property type="entry name" value="P-loop containing nucleoside triphosphate hydrolases"/>
    <property type="match status" value="1"/>
</dbReference>
<dbReference type="PROSITE" id="PS51219">
    <property type="entry name" value="DPCK"/>
    <property type="match status" value="1"/>
</dbReference>
<keyword id="KW-0067">ATP-binding</keyword>
<keyword id="KW-0173">Coenzyme A biosynthesis</keyword>
<keyword id="KW-0963">Cytoplasm</keyword>
<keyword id="KW-0418">Kinase</keyword>
<keyword id="KW-0547">Nucleotide-binding</keyword>
<keyword id="KW-0808">Transferase</keyword>
<proteinExistence type="inferred from homology"/>